<feature type="chain" id="PRO_0000299869" description="Putative uncharacterized protein YDR015C">
    <location>
        <begin position="1"/>
        <end position="79"/>
    </location>
</feature>
<proteinExistence type="uncertain"/>
<dbReference type="EMBL" id="X95966">
    <property type="protein sequence ID" value="CAA65207.1"/>
    <property type="status" value="ALT_FRAME"/>
    <property type="molecule type" value="Genomic_DNA"/>
</dbReference>
<dbReference type="EMBL" id="Z74311">
    <property type="protein sequence ID" value="CAA98835.1"/>
    <property type="status" value="ALT_FRAME"/>
    <property type="molecule type" value="Genomic_DNA"/>
</dbReference>
<dbReference type="PIR" id="S63422">
    <property type="entry name" value="S63422"/>
</dbReference>
<dbReference type="IntAct" id="Q12195">
    <property type="interactions" value="1"/>
</dbReference>
<dbReference type="STRING" id="4932.YDR015C"/>
<dbReference type="PaxDb" id="4932-YDR015C"/>
<dbReference type="EnsemblFungi" id="YDR015C_mRNA">
    <property type="protein sequence ID" value="YDR015C"/>
    <property type="gene ID" value="YDR015C"/>
</dbReference>
<dbReference type="AGR" id="SGD:S000002422"/>
<dbReference type="SGD" id="S000002422">
    <property type="gene designation" value="YDR015C"/>
</dbReference>
<dbReference type="HOGENOM" id="CLU_2607867_0_0_1"/>
<organism>
    <name type="scientific">Saccharomyces cerevisiae (strain ATCC 204508 / S288c)</name>
    <name type="common">Baker's yeast</name>
    <dbReference type="NCBI Taxonomy" id="559292"/>
    <lineage>
        <taxon>Eukaryota</taxon>
        <taxon>Fungi</taxon>
        <taxon>Dikarya</taxon>
        <taxon>Ascomycota</taxon>
        <taxon>Saccharomycotina</taxon>
        <taxon>Saccharomycetes</taxon>
        <taxon>Saccharomycetales</taxon>
        <taxon>Saccharomycetaceae</taxon>
        <taxon>Saccharomyces</taxon>
    </lineage>
</organism>
<name>YD015_YEAST</name>
<reference key="1">
    <citation type="journal article" date="1996" name="Yeast">
        <title>Sequencing and analysis of a 35.4 kb region on the right arm of chromosome IV from Saccharomyces cerevisiae reveal 23 open reading frames.</title>
        <authorList>
            <person name="Eide L.G."/>
            <person name="Sander C."/>
            <person name="Prydz H."/>
        </authorList>
    </citation>
    <scope>NUCLEOTIDE SEQUENCE [GENOMIC DNA]</scope>
</reference>
<reference key="2">
    <citation type="journal article" date="1997" name="Nature">
        <title>The nucleotide sequence of Saccharomyces cerevisiae chromosome IV.</title>
        <authorList>
            <person name="Jacq C."/>
            <person name="Alt-Moerbe J."/>
            <person name="Andre B."/>
            <person name="Arnold W."/>
            <person name="Bahr A."/>
            <person name="Ballesta J.P.G."/>
            <person name="Bargues M."/>
            <person name="Baron L."/>
            <person name="Becker A."/>
            <person name="Biteau N."/>
            <person name="Bloecker H."/>
            <person name="Blugeon C."/>
            <person name="Boskovic J."/>
            <person name="Brandt P."/>
            <person name="Brueckner M."/>
            <person name="Buitrago M.J."/>
            <person name="Coster F."/>
            <person name="Delaveau T."/>
            <person name="del Rey F."/>
            <person name="Dujon B."/>
            <person name="Eide L.G."/>
            <person name="Garcia-Cantalejo J.M."/>
            <person name="Goffeau A."/>
            <person name="Gomez-Peris A."/>
            <person name="Granotier C."/>
            <person name="Hanemann V."/>
            <person name="Hankeln T."/>
            <person name="Hoheisel J.D."/>
            <person name="Jaeger W."/>
            <person name="Jimenez A."/>
            <person name="Jonniaux J.-L."/>
            <person name="Kraemer C."/>
            <person name="Kuester H."/>
            <person name="Laamanen P."/>
            <person name="Legros Y."/>
            <person name="Louis E.J."/>
            <person name="Moeller-Rieker S."/>
            <person name="Monnet A."/>
            <person name="Moro M."/>
            <person name="Mueller-Auer S."/>
            <person name="Nussbaumer B."/>
            <person name="Paricio N."/>
            <person name="Paulin L."/>
            <person name="Perea J."/>
            <person name="Perez-Alonso M."/>
            <person name="Perez-Ortin J.E."/>
            <person name="Pohl T.M."/>
            <person name="Prydz H."/>
            <person name="Purnelle B."/>
            <person name="Rasmussen S.W."/>
            <person name="Remacha M.A."/>
            <person name="Revuelta J.L."/>
            <person name="Rieger M."/>
            <person name="Salom D."/>
            <person name="Saluz H.P."/>
            <person name="Saiz J.E."/>
            <person name="Saren A.-M."/>
            <person name="Schaefer M."/>
            <person name="Scharfe M."/>
            <person name="Schmidt E.R."/>
            <person name="Schneider C."/>
            <person name="Scholler P."/>
            <person name="Schwarz S."/>
            <person name="Soler-Mira A."/>
            <person name="Urrestarazu L.A."/>
            <person name="Verhasselt P."/>
            <person name="Vissers S."/>
            <person name="Voet M."/>
            <person name="Volckaert G."/>
            <person name="Wagner G."/>
            <person name="Wambutt R."/>
            <person name="Wedler E."/>
            <person name="Wedler H."/>
            <person name="Woelfl S."/>
            <person name="Harris D.E."/>
            <person name="Bowman S."/>
            <person name="Brown D."/>
            <person name="Churcher C.M."/>
            <person name="Connor R."/>
            <person name="Dedman K."/>
            <person name="Gentles S."/>
            <person name="Hamlin N."/>
            <person name="Hunt S."/>
            <person name="Jones L."/>
            <person name="McDonald S."/>
            <person name="Murphy L.D."/>
            <person name="Niblett D."/>
            <person name="Odell C."/>
            <person name="Oliver K."/>
            <person name="Rajandream M.A."/>
            <person name="Richards C."/>
            <person name="Shore L."/>
            <person name="Walsh S.V."/>
            <person name="Barrell B.G."/>
            <person name="Dietrich F.S."/>
            <person name="Mulligan J.T."/>
            <person name="Allen E."/>
            <person name="Araujo R."/>
            <person name="Aviles E."/>
            <person name="Berno A."/>
            <person name="Carpenter J."/>
            <person name="Chen E."/>
            <person name="Cherry J.M."/>
            <person name="Chung E."/>
            <person name="Duncan M."/>
            <person name="Hunicke-Smith S."/>
            <person name="Hyman R.W."/>
            <person name="Komp C."/>
            <person name="Lashkari D."/>
            <person name="Lew H."/>
            <person name="Lin D."/>
            <person name="Mosedale D."/>
            <person name="Nakahara K."/>
            <person name="Namath A."/>
            <person name="Oefner P."/>
            <person name="Oh C."/>
            <person name="Petel F.X."/>
            <person name="Roberts D."/>
            <person name="Schramm S."/>
            <person name="Schroeder M."/>
            <person name="Shogren T."/>
            <person name="Shroff N."/>
            <person name="Winant A."/>
            <person name="Yelton M.A."/>
            <person name="Botstein D."/>
            <person name="Davis R.W."/>
            <person name="Johnston M."/>
            <person name="Andrews S."/>
            <person name="Brinkman R."/>
            <person name="Cooper J."/>
            <person name="Ding H."/>
            <person name="Du Z."/>
            <person name="Favello A."/>
            <person name="Fulton L."/>
            <person name="Gattung S."/>
            <person name="Greco T."/>
            <person name="Hallsworth K."/>
            <person name="Hawkins J."/>
            <person name="Hillier L.W."/>
            <person name="Jier M."/>
            <person name="Johnson D."/>
            <person name="Johnston L."/>
            <person name="Kirsten J."/>
            <person name="Kucaba T."/>
            <person name="Langston Y."/>
            <person name="Latreille P."/>
            <person name="Le T."/>
            <person name="Mardis E."/>
            <person name="Menezes S."/>
            <person name="Miller N."/>
            <person name="Nhan M."/>
            <person name="Pauley A."/>
            <person name="Peluso D."/>
            <person name="Rifkin L."/>
            <person name="Riles L."/>
            <person name="Taich A."/>
            <person name="Trevaskis E."/>
            <person name="Vignati D."/>
            <person name="Wilcox L."/>
            <person name="Wohldman P."/>
            <person name="Vaudin M."/>
            <person name="Wilson R."/>
            <person name="Waterston R."/>
            <person name="Albermann K."/>
            <person name="Hani J."/>
            <person name="Heumann K."/>
            <person name="Kleine K."/>
            <person name="Mewes H.-W."/>
            <person name="Zollner A."/>
            <person name="Zaccaria P."/>
        </authorList>
    </citation>
    <scope>NUCLEOTIDE SEQUENCE [LARGE SCALE GENOMIC DNA]</scope>
    <source>
        <strain>ATCC 204508 / S288c</strain>
    </source>
</reference>
<reference key="3">
    <citation type="journal article" date="2014" name="G3 (Bethesda)">
        <title>The reference genome sequence of Saccharomyces cerevisiae: Then and now.</title>
        <authorList>
            <person name="Engel S.R."/>
            <person name="Dietrich F.S."/>
            <person name="Fisk D.G."/>
            <person name="Binkley G."/>
            <person name="Balakrishnan R."/>
            <person name="Costanzo M.C."/>
            <person name="Dwight S.S."/>
            <person name="Hitz B.C."/>
            <person name="Karra K."/>
            <person name="Nash R.S."/>
            <person name="Weng S."/>
            <person name="Wong E.D."/>
            <person name="Lloyd P."/>
            <person name="Skrzypek M.S."/>
            <person name="Miyasato S.R."/>
            <person name="Simison M."/>
            <person name="Cherry J.M."/>
        </authorList>
    </citation>
    <scope>GENOME REANNOTATION</scope>
    <source>
        <strain>ATCC 204508 / S288c</strain>
    </source>
</reference>
<reference key="4">
    <citation type="journal article" date="2006" name="Genes Dev.">
        <title>Budding yeast Hed1 down-regulates the mitotic recombination machinery when meiotic recombination is impaired.</title>
        <authorList>
            <person name="Tsubouchi H."/>
            <person name="Roeder G.S."/>
        </authorList>
    </citation>
    <scope>IDENTIFICATION OF FRAMESHIFT</scope>
</reference>
<accession>Q12195</accession>
<gene>
    <name type="ordered locus">YDR015C</name>
    <name type="ORF">PZF129</name>
</gene>
<sequence length="79" mass="8892">MSCSFHISSPLGSSSSLEGFSSLKVVVVACQALSRDLLGIDLVLLLLFWRPDKHPHWGFRHLCSQTDFWHEVVVFPIPN</sequence>
<comment type="miscellaneous">
    <text evidence="1">Partially overlaps HED1.</text>
</comment>
<comment type="caution">
    <text evidence="2">Product of a dubious gene prediction unlikely to encode a functional protein. Because of that it is not part of the S.cerevisiae S288c complete/reference proteome set.</text>
</comment>
<comment type="sequence caution" evidence="1">
    <conflict type="frameshift">
        <sequence resource="EMBL-CDS" id="CAA65207"/>
    </conflict>
</comment>
<comment type="sequence caution" evidence="1">
    <conflict type="frameshift">
        <sequence resource="EMBL-CDS" id="CAA98835"/>
    </conflict>
</comment>
<protein>
    <recommendedName>
        <fullName>Putative uncharacterized protein YDR015C</fullName>
    </recommendedName>
</protein>
<evidence type="ECO:0000305" key="1"/>
<evidence type="ECO:0000305" key="2">
    <source>
    </source>
</evidence>